<organism>
    <name type="scientific">Arabidopsis thaliana</name>
    <name type="common">Mouse-ear cress</name>
    <dbReference type="NCBI Taxonomy" id="3702"/>
    <lineage>
        <taxon>Eukaryota</taxon>
        <taxon>Viridiplantae</taxon>
        <taxon>Streptophyta</taxon>
        <taxon>Embryophyta</taxon>
        <taxon>Tracheophyta</taxon>
        <taxon>Spermatophyta</taxon>
        <taxon>Magnoliopsida</taxon>
        <taxon>eudicotyledons</taxon>
        <taxon>Gunneridae</taxon>
        <taxon>Pentapetalae</taxon>
        <taxon>rosids</taxon>
        <taxon>malvids</taxon>
        <taxon>Brassicales</taxon>
        <taxon>Brassicaceae</taxon>
        <taxon>Camelineae</taxon>
        <taxon>Arabidopsis</taxon>
    </lineage>
</organism>
<name>OTU8_ARATH</name>
<reference key="1">
    <citation type="journal article" date="1999" name="Nature">
        <title>Sequence and analysis of chromosome 2 of the plant Arabidopsis thaliana.</title>
        <authorList>
            <person name="Lin X."/>
            <person name="Kaul S."/>
            <person name="Rounsley S.D."/>
            <person name="Shea T.P."/>
            <person name="Benito M.-I."/>
            <person name="Town C.D."/>
            <person name="Fujii C.Y."/>
            <person name="Mason T.M."/>
            <person name="Bowman C.L."/>
            <person name="Barnstead M.E."/>
            <person name="Feldblyum T.V."/>
            <person name="Buell C.R."/>
            <person name="Ketchum K.A."/>
            <person name="Lee J.J."/>
            <person name="Ronning C.M."/>
            <person name="Koo H.L."/>
            <person name="Moffat K.S."/>
            <person name="Cronin L.A."/>
            <person name="Shen M."/>
            <person name="Pai G."/>
            <person name="Van Aken S."/>
            <person name="Umayam L."/>
            <person name="Tallon L.J."/>
            <person name="Gill J.E."/>
            <person name="Adams M.D."/>
            <person name="Carrera A.J."/>
            <person name="Creasy T.H."/>
            <person name="Goodman H.M."/>
            <person name="Somerville C.R."/>
            <person name="Copenhaver G.P."/>
            <person name="Preuss D."/>
            <person name="Nierman W.C."/>
            <person name="White O."/>
            <person name="Eisen J.A."/>
            <person name="Salzberg S.L."/>
            <person name="Fraser C.M."/>
            <person name="Venter J.C."/>
        </authorList>
    </citation>
    <scope>NUCLEOTIDE SEQUENCE [LARGE SCALE GENOMIC DNA]</scope>
    <source>
        <strain>cv. Columbia</strain>
    </source>
</reference>
<reference key="2">
    <citation type="journal article" date="2017" name="Plant J.">
        <title>Araport11: a complete reannotation of the Arabidopsis thaliana reference genome.</title>
        <authorList>
            <person name="Cheng C.Y."/>
            <person name="Krishnakumar V."/>
            <person name="Chan A.P."/>
            <person name="Thibaud-Nissen F."/>
            <person name="Schobel S."/>
            <person name="Town C.D."/>
        </authorList>
    </citation>
    <scope>GENOME REANNOTATION</scope>
    <source>
        <strain>cv. Columbia</strain>
    </source>
</reference>
<reference key="3">
    <citation type="journal article" date="2014" name="Front. Plant Sci.">
        <title>Distinct phylogenetic relationships and biochemical properties of Arabidopsis ovarian tumor-related deubiquitinases support their functional differentiation.</title>
        <authorList>
            <person name="Radjacommare R."/>
            <person name="Usharani R."/>
            <person name="Kuo C.-H."/>
            <person name="Fu H."/>
        </authorList>
    </citation>
    <scope>GENE FAMILY</scope>
    <scope>NOMENCLATURE</scope>
</reference>
<protein>
    <recommendedName>
        <fullName evidence="7">Putative OVARIAN TUMOR DOMAIN-containing deubiquitinating enzyme 8</fullName>
        <shortName evidence="7">OTU domain-containing protein 8</shortName>
        <ecNumber evidence="1">3.4.19.12</ecNumber>
    </recommendedName>
    <alternativeName>
        <fullName evidence="7">Deubiquitinating enzyme OTU8</fullName>
    </alternativeName>
</protein>
<feature type="chain" id="PRO_0000447758" description="Putative OVARIAN TUMOR DOMAIN-containing deubiquitinating enzyme 8">
    <location>
        <begin position="1"/>
        <end position="189"/>
    </location>
</feature>
<feature type="domain" description="OTU" evidence="4">
    <location>
        <begin position="1"/>
        <end position="103"/>
    </location>
</feature>
<feature type="region of interest" description="Disordered" evidence="6">
    <location>
        <begin position="105"/>
        <end position="189"/>
    </location>
</feature>
<feature type="coiled-coil region" evidence="3">
    <location>
        <begin position="120"/>
        <end position="181"/>
    </location>
</feature>
<feature type="short sequence motif" description="Nuclear localization signal 1" evidence="5">
    <location>
        <begin position="125"/>
        <end position="132"/>
    </location>
</feature>
<feature type="short sequence motif" description="Nuclear localization signal 2" evidence="5">
    <location>
        <begin position="163"/>
        <end position="170"/>
    </location>
</feature>
<feature type="compositionally biased region" description="Basic and acidic residues" evidence="6">
    <location>
        <begin position="126"/>
        <end position="174"/>
    </location>
</feature>
<feature type="compositionally biased region" description="Basic residues" evidence="6">
    <location>
        <begin position="175"/>
        <end position="189"/>
    </location>
</feature>
<feature type="active site" evidence="3">
    <location>
        <position position="5"/>
    </location>
</feature>
<feature type="active site" description="Nucleophile" evidence="2">
    <location>
        <position position="8"/>
    </location>
</feature>
<feature type="active site" evidence="2">
    <location>
        <position position="96"/>
    </location>
</feature>
<accession>O80949</accession>
<gene>
    <name evidence="7" type="primary">OTU8</name>
    <name evidence="10" type="ordered locus">At2g39320</name>
    <name evidence="11" type="ORF">T16B24.4</name>
</gene>
<dbReference type="EC" id="3.4.19.12" evidence="1"/>
<dbReference type="EMBL" id="AC004697">
    <property type="protein sequence ID" value="AAC28978.1"/>
    <property type="molecule type" value="Genomic_DNA"/>
</dbReference>
<dbReference type="EMBL" id="CP002685">
    <property type="protein sequence ID" value="AEC09661.1"/>
    <property type="molecule type" value="Genomic_DNA"/>
</dbReference>
<dbReference type="PIR" id="T02570">
    <property type="entry name" value="T02570"/>
</dbReference>
<dbReference type="RefSeq" id="NP_181464.1">
    <property type="nucleotide sequence ID" value="NM_129489.2"/>
</dbReference>
<dbReference type="SMR" id="O80949"/>
<dbReference type="STRING" id="3702.O80949"/>
<dbReference type="PaxDb" id="3702-AT2G39320.1"/>
<dbReference type="EnsemblPlants" id="AT2G39320.1">
    <property type="protein sequence ID" value="AT2G39320.1"/>
    <property type="gene ID" value="AT2G39320"/>
</dbReference>
<dbReference type="GeneID" id="818517"/>
<dbReference type="Gramene" id="AT2G39320.1">
    <property type="protein sequence ID" value="AT2G39320.1"/>
    <property type="gene ID" value="AT2G39320"/>
</dbReference>
<dbReference type="KEGG" id="ath:AT2G39320"/>
<dbReference type="Araport" id="AT2G39320"/>
<dbReference type="TAIR" id="AT2G39320"/>
<dbReference type="eggNOG" id="KOG2605">
    <property type="taxonomic scope" value="Eukaryota"/>
</dbReference>
<dbReference type="HOGENOM" id="CLU_1442902_0_0_1"/>
<dbReference type="InParanoid" id="O80949"/>
<dbReference type="OMA" id="FKEDASM"/>
<dbReference type="PhylomeDB" id="O80949"/>
<dbReference type="Proteomes" id="UP000006548">
    <property type="component" value="Chromosome 2"/>
</dbReference>
<dbReference type="ExpressionAtlas" id="O80949">
    <property type="expression patterns" value="baseline and differential"/>
</dbReference>
<dbReference type="GO" id="GO:0005634">
    <property type="term" value="C:nucleus"/>
    <property type="evidence" value="ECO:0007669"/>
    <property type="project" value="UniProtKB-SubCell"/>
</dbReference>
<dbReference type="GO" id="GO:0004843">
    <property type="term" value="F:cysteine-type deubiquitinase activity"/>
    <property type="evidence" value="ECO:0007669"/>
    <property type="project" value="UniProtKB-EC"/>
</dbReference>
<dbReference type="FunFam" id="3.90.70.80:FF:000065">
    <property type="entry name" value="Cysteine proteinases superfamily protein"/>
    <property type="match status" value="1"/>
</dbReference>
<dbReference type="Gene3D" id="3.90.70.80">
    <property type="match status" value="2"/>
</dbReference>
<dbReference type="InterPro" id="IPR003323">
    <property type="entry name" value="OTU_dom"/>
</dbReference>
<dbReference type="InterPro" id="IPR038765">
    <property type="entry name" value="Papain-like_cys_pep_sf"/>
</dbReference>
<dbReference type="InterPro" id="IPR050704">
    <property type="entry name" value="Peptidase_C85-like"/>
</dbReference>
<dbReference type="PANTHER" id="PTHR12419">
    <property type="entry name" value="OTU DOMAIN CONTAINING PROTEIN"/>
    <property type="match status" value="1"/>
</dbReference>
<dbReference type="PANTHER" id="PTHR12419:SF103">
    <property type="entry name" value="OVARIAN TUMOR DOMAIN-CONTAINING DEUBIQUITINATING ENZYME 10-RELATED"/>
    <property type="match status" value="1"/>
</dbReference>
<dbReference type="SUPFAM" id="SSF54001">
    <property type="entry name" value="Cysteine proteinases"/>
    <property type="match status" value="1"/>
</dbReference>
<dbReference type="PROSITE" id="PS50802">
    <property type="entry name" value="OTU"/>
    <property type="match status" value="1"/>
</dbReference>
<sequence length="189" mass="22398">MMKSDGNCQFRALADQLYQNSDCHELVRQEIVKQNMSLSTNSQWGDEVTLRVAADVYQVKIILITSIKLIPFMEFLPKSQKEPDKVIHMSYLAGIHFNSIYKKNKEKGSRSSSSSSSAVWMKLQRKKENEAKKKEEEEKERKDMEKEEKKKDKEDKKKDKEDKKKAKVQKEKKEKKEKKNRNHHFHYSE</sequence>
<proteinExistence type="uncertain"/>
<evidence type="ECO:0000250" key="1">
    <source>
        <dbReference type="UniProtKB" id="F4K3M6"/>
    </source>
</evidence>
<evidence type="ECO:0000250" key="2">
    <source>
        <dbReference type="UniProtKB" id="Q96G74"/>
    </source>
</evidence>
<evidence type="ECO:0000255" key="3"/>
<evidence type="ECO:0000255" key="4">
    <source>
        <dbReference type="PROSITE-ProRule" id="PRU00139"/>
    </source>
</evidence>
<evidence type="ECO:0000255" key="5">
    <source>
        <dbReference type="PROSITE-ProRule" id="PRU00768"/>
    </source>
</evidence>
<evidence type="ECO:0000256" key="6">
    <source>
        <dbReference type="SAM" id="MobiDB-lite"/>
    </source>
</evidence>
<evidence type="ECO:0000303" key="7">
    <source>
    </source>
</evidence>
<evidence type="ECO:0000305" key="8"/>
<evidence type="ECO:0000305" key="9">
    <source>
    </source>
</evidence>
<evidence type="ECO:0000312" key="10">
    <source>
        <dbReference type="Araport" id="AT2G39320"/>
    </source>
</evidence>
<evidence type="ECO:0000312" key="11">
    <source>
        <dbReference type="EMBL" id="AEC09661.1"/>
    </source>
</evidence>
<comment type="function">
    <text evidence="9">Hydrolase that can remove conjugated ubiquitin from proteins in vitro and may therefore play an important regulatory role at the level of protein turnover by preventing degradation.</text>
</comment>
<comment type="catalytic activity">
    <reaction evidence="1">
        <text>Thiol-dependent hydrolysis of ester, thioester, amide, peptide and isopeptide bonds formed by the C-terminal Gly of ubiquitin (a 76-residue protein attached to proteins as an intracellular targeting signal).</text>
        <dbReference type="EC" id="3.4.19.12"/>
    </reaction>
</comment>
<comment type="subcellular location">
    <subcellularLocation>
        <location evidence="5">Nucleus</location>
    </subcellularLocation>
</comment>
<comment type="similarity">
    <text evidence="8">Belongs to the peptidase C85 family.</text>
</comment>
<comment type="caution">
    <text evidence="7">Could be the product of a pseudogene.</text>
</comment>
<keyword id="KW-0175">Coiled coil</keyword>
<keyword id="KW-0378">Hydrolase</keyword>
<keyword id="KW-0539">Nucleus</keyword>
<keyword id="KW-1185">Reference proteome</keyword>
<keyword id="KW-0833">Ubl conjugation pathway</keyword>